<gene>
    <name type="primary">rebM</name>
</gene>
<reference key="1">
    <citation type="submission" date="2002-09" db="EMBL/GenBank/DDBJ databases">
        <title>Lechevalieria aerocolonigenes strain ATCC 39243 rebeccamycin biosynthetic gene cluster.</title>
        <authorList>
            <person name="Nishizawa T."/>
            <person name="Aldrich C.C."/>
            <person name="Sherman D.H."/>
        </authorList>
    </citation>
    <scope>NUCLEOTIDE SEQUENCE [GENOMIC DNA]</scope>
    <source>
        <strain>ATCC 39243 / DSM 44217 / BCRC 13729 / KCTC 9384</strain>
    </source>
</reference>
<reference key="2">
    <citation type="journal article" date="2006" name="ChemBioChem">
        <title>RebG- and RebM-catalyzed indolocarbazole diversification.</title>
        <authorList>
            <person name="Zhang C."/>
            <person name="Albermann C."/>
            <person name="Fu X."/>
            <person name="Peters N.R."/>
            <person name="Chisholm J.D."/>
            <person name="Zhang G."/>
            <person name="Gilbert E.J."/>
            <person name="Wang P.G."/>
            <person name="Van Vranken D.L."/>
            <person name="Thorson J.S."/>
        </authorList>
    </citation>
    <scope>FUNCTION</scope>
    <scope>SUBUNIT</scope>
    <scope>BIOPHYSICOCHEMICAL PROPERTIES</scope>
</reference>
<reference key="3">
    <citation type="journal article" date="2008" name="J. Biol. Chem.">
        <title>Structure and mechanism of the rebeccamycin sugar 4'-O-methyltransferase RebM.</title>
        <authorList>
            <person name="Singh S."/>
            <person name="McCoy J.G."/>
            <person name="Zhang C."/>
            <person name="Bingman C.A."/>
            <person name="Phillips G.N."/>
            <person name="Thorson J.S."/>
        </authorList>
    </citation>
    <scope>X-RAY CRYSTALLOGRAPHY (2.65 ANGSTROMS) OF 12-283 IN COMPLEX WITH S-ADENOSYL-L-HOMOCYSTEINE</scope>
    <scope>FUNCTION</scope>
    <scope>CATALYTIC ACTIVITY</scope>
    <scope>BIOPHYSICOCHEMICAL PROPERTIES</scope>
    <scope>SUBUNIT</scope>
    <scope>MUTAGENESIS OF PRO-85; LEU-146; SER-148; HIS-150; HIS-151 AND ASP-176</scope>
</reference>
<proteinExistence type="evidence at protein level"/>
<comment type="function">
    <text evidence="1 2">Glycosyl O-methyltransferase that catalyzes the final step in the biosynthesis of rebeccamycin, an indolocarbazole alkaloid that inhibits topoisomerase 1. Has broad substrate specificity and functions as glycosyl O-methyltransferase on a number of rebeccamycin analogs.</text>
</comment>
<comment type="catalytic activity">
    <reaction evidence="2">
        <text>4'-demethylrebeccamycin + S-adenosyl-L-methionine = rebeccamycin + S-adenosyl-L-homocysteine + H(+)</text>
        <dbReference type="Rhea" id="RHEA:27353"/>
        <dbReference type="ChEBI" id="CHEBI:15378"/>
        <dbReference type="ChEBI" id="CHEBI:57856"/>
        <dbReference type="ChEBI" id="CHEBI:59789"/>
        <dbReference type="ChEBI" id="CHEBI:135511"/>
        <dbReference type="ChEBI" id="CHEBI:595389"/>
        <dbReference type="EC" id="2.1.1.164"/>
    </reaction>
</comment>
<comment type="biophysicochemical properties">
    <kinetics>
        <KM evidence="1 2">12 uM for S-adenosyl-L-methionine</KM>
    </kinetics>
    <phDependence>
        <text evidence="1 2">Optimum pH is 6.5-8.</text>
    </phDependence>
</comment>
<comment type="subunit">
    <text evidence="1 2">Monomer.</text>
</comment>
<comment type="similarity">
    <text evidence="3">Belongs to the methyltransferase superfamily.</text>
</comment>
<evidence type="ECO:0000269" key="1">
    <source>
    </source>
</evidence>
<evidence type="ECO:0000269" key="2">
    <source>
    </source>
</evidence>
<evidence type="ECO:0000305" key="3"/>
<evidence type="ECO:0000305" key="4">
    <source>
    </source>
</evidence>
<evidence type="ECO:0007744" key="5">
    <source>
        <dbReference type="PDB" id="3BUS"/>
    </source>
</evidence>
<evidence type="ECO:0007829" key="6">
    <source>
        <dbReference type="PDB" id="3BUS"/>
    </source>
</evidence>
<name>REBMT_LENAE</name>
<keyword id="KW-0002">3D-structure</keyword>
<keyword id="KW-0489">Methyltransferase</keyword>
<keyword id="KW-0949">S-adenosyl-L-methionine</keyword>
<keyword id="KW-0808">Transferase</keyword>
<feature type="chain" id="PRO_0000415892" description="Demethylrebeccamycin-D-glucose O-methyltransferase">
    <location>
        <begin position="1"/>
        <end position="283"/>
    </location>
</feature>
<feature type="binding site" evidence="4 5">
    <location>
        <position position="101"/>
    </location>
    <ligand>
        <name>S-adenosyl-L-methionine</name>
        <dbReference type="ChEBI" id="CHEBI:59789"/>
    </ligand>
</feature>
<feature type="binding site" evidence="4 5">
    <location>
        <position position="106"/>
    </location>
    <ligand>
        <name>S-adenosyl-L-methionine</name>
        <dbReference type="ChEBI" id="CHEBI:59789"/>
    </ligand>
</feature>
<feature type="binding site" evidence="4 5">
    <location>
        <begin position="129"/>
        <end position="130"/>
    </location>
    <ligand>
        <name>S-adenosyl-L-methionine</name>
        <dbReference type="ChEBI" id="CHEBI:59789"/>
    </ligand>
</feature>
<feature type="binding site" evidence="4 5">
    <location>
        <position position="146"/>
    </location>
    <ligand>
        <name>S-adenosyl-L-methionine</name>
        <dbReference type="ChEBI" id="CHEBI:59789"/>
    </ligand>
</feature>
<feature type="binding site" evidence="4">
    <location>
        <position position="151"/>
    </location>
    <ligand>
        <name>S-adenosyl-L-methionine</name>
        <dbReference type="ChEBI" id="CHEBI:59789"/>
    </ligand>
</feature>
<feature type="site" description="Important for catalysis">
    <location>
        <position position="150"/>
    </location>
</feature>
<feature type="mutagenesis site" description="Reduces enzyme activity by 87%. Strongly reduced affinity for S-adenosyl-L-methionine." evidence="2">
    <original>P</original>
    <variation>S</variation>
    <location>
        <position position="85"/>
    </location>
</feature>
<feature type="mutagenesis site" description="Reduces enzyme activity by 45%. Reduces affinity for S-adenosyl-L-methionine." evidence="2">
    <original>L</original>
    <variation>V</variation>
    <location>
        <position position="146"/>
    </location>
</feature>
<feature type="mutagenesis site" description="Reduces enzyme activity by 50%." evidence="2">
    <original>S</original>
    <variation>A</variation>
    <location>
        <position position="148"/>
    </location>
</feature>
<feature type="mutagenesis site" description="Reduces enzyme activity by 95%. Slightly reduced affinity for S-adenosyl-L-methionine. Loss of enzyme activity; when associated with A-151." evidence="2">
    <original>H</original>
    <variation>A</variation>
    <location>
        <position position="150"/>
    </location>
</feature>
<feature type="mutagenesis site" description="Reduces enzyme activity by 80%. Strongly reduced affinity for S-adenosyl-L-methionine. Loss of enzyme activity; when associated with A-150." evidence="2">
    <original>H</original>
    <variation>A</variation>
    <location>
        <position position="151"/>
    </location>
</feature>
<feature type="mutagenesis site" description="Reduces enzyme activity by 90%. Strongly reduced affinity for S-adenosyl-L-methionine." evidence="2">
    <original>D</original>
    <variation>A</variation>
    <location>
        <position position="176"/>
    </location>
</feature>
<feature type="helix" evidence="6">
    <location>
        <begin position="35"/>
        <end position="37"/>
    </location>
</feature>
<feature type="helix" evidence="6">
    <location>
        <begin position="52"/>
        <end position="66"/>
    </location>
</feature>
<feature type="strand" evidence="6">
    <location>
        <begin position="74"/>
        <end position="79"/>
    </location>
</feature>
<feature type="helix" evidence="6">
    <location>
        <begin position="84"/>
        <end position="92"/>
    </location>
</feature>
<feature type="strand" evidence="6">
    <location>
        <begin position="96"/>
        <end position="102"/>
    </location>
</feature>
<feature type="helix" evidence="6">
    <location>
        <begin position="104"/>
        <end position="116"/>
    </location>
</feature>
<feature type="turn" evidence="6">
    <location>
        <begin position="120"/>
        <end position="122"/>
    </location>
</feature>
<feature type="strand" evidence="6">
    <location>
        <begin position="123"/>
        <end position="127"/>
    </location>
</feature>
<feature type="strand" evidence="6">
    <location>
        <begin position="140"/>
        <end position="147"/>
    </location>
</feature>
<feature type="turn" evidence="6">
    <location>
        <begin position="149"/>
        <end position="151"/>
    </location>
</feature>
<feature type="helix" evidence="6">
    <location>
        <begin position="155"/>
        <end position="163"/>
    </location>
</feature>
<feature type="strand" evidence="6">
    <location>
        <begin position="166"/>
        <end position="181"/>
    </location>
</feature>
<feature type="helix" evidence="6">
    <location>
        <begin position="185"/>
        <end position="198"/>
    </location>
</feature>
<feature type="helix" evidence="6">
    <location>
        <begin position="206"/>
        <end position="215"/>
    </location>
</feature>
<feature type="strand" evidence="6">
    <location>
        <begin position="219"/>
        <end position="225"/>
    </location>
</feature>
<feature type="helix" evidence="6">
    <location>
        <begin position="227"/>
        <end position="230"/>
    </location>
</feature>
<feature type="helix" evidence="6">
    <location>
        <begin position="233"/>
        <end position="243"/>
    </location>
</feature>
<feature type="helix" evidence="6">
    <location>
        <begin position="245"/>
        <end position="252"/>
    </location>
</feature>
<feature type="helix" evidence="6">
    <location>
        <begin position="254"/>
        <end position="268"/>
    </location>
</feature>
<feature type="strand" evidence="6">
    <location>
        <begin position="273"/>
        <end position="281"/>
    </location>
</feature>
<organism>
    <name type="scientific">Lentzea aerocolonigenes</name>
    <name type="common">Lechevalieria aerocolonigenes</name>
    <name type="synonym">Saccharothrix aerocolonigenes</name>
    <dbReference type="NCBI Taxonomy" id="68170"/>
    <lineage>
        <taxon>Bacteria</taxon>
        <taxon>Bacillati</taxon>
        <taxon>Actinomycetota</taxon>
        <taxon>Actinomycetes</taxon>
        <taxon>Pseudonocardiales</taxon>
        <taxon>Pseudonocardiaceae</taxon>
        <taxon>Lentzea</taxon>
    </lineage>
</organism>
<sequence length="283" mass="30374">MTESKSEGTAVAAPTPEEVRQMYDDFTDPFARIWGENLHFGYWEDAGADVSVDDATDRLTDEMIALLDVRSGDRVLDVGCGIGKPAVRLATARDVRVTGISISRPQVNQANARATAAGLANRVTFSYADAMDLPFEDASFDAVWALESLHHMPDRGRALREMARVLRPGGTVAIADFVLLAPVEGAKKEAVDAFRAGGGVLSLGGIDEYESDVRQAELVVTSTVDISAQARPSLVKTAEAFENARSQVEPFMGAEGLDRMIATFRGLAEVPEAGYVLIGARKP</sequence>
<accession>Q8KZ94</accession>
<dbReference type="EC" id="2.1.1.164" evidence="2"/>
<dbReference type="EMBL" id="AB090952">
    <property type="protein sequence ID" value="BAC10678.1"/>
    <property type="molecule type" value="Genomic_DNA"/>
</dbReference>
<dbReference type="PDB" id="3BUS">
    <property type="method" value="X-ray"/>
    <property type="resolution" value="2.65 A"/>
    <property type="chains" value="A/B=12-283"/>
</dbReference>
<dbReference type="PDBsum" id="3BUS"/>
<dbReference type="SMR" id="Q8KZ94"/>
<dbReference type="KEGG" id="ag:BAC10678"/>
<dbReference type="BRENDA" id="2.1.1.164">
    <property type="organism ID" value="4340"/>
</dbReference>
<dbReference type="EvolutionaryTrace" id="Q8KZ94"/>
<dbReference type="GO" id="GO:0102082">
    <property type="term" value="F:demethylrebeccamycin--D-glucose O-methyltransferase activity"/>
    <property type="evidence" value="ECO:0007669"/>
    <property type="project" value="UniProtKB-EC"/>
</dbReference>
<dbReference type="GO" id="GO:0008757">
    <property type="term" value="F:S-adenosylmethionine-dependent methyltransferase activity"/>
    <property type="evidence" value="ECO:0007669"/>
    <property type="project" value="InterPro"/>
</dbReference>
<dbReference type="GO" id="GO:0032259">
    <property type="term" value="P:methylation"/>
    <property type="evidence" value="ECO:0007669"/>
    <property type="project" value="UniProtKB-KW"/>
</dbReference>
<dbReference type="CDD" id="cd02440">
    <property type="entry name" value="AdoMet_MTases"/>
    <property type="match status" value="1"/>
</dbReference>
<dbReference type="Gene3D" id="3.40.50.150">
    <property type="entry name" value="Vaccinia Virus protein VP39"/>
    <property type="match status" value="1"/>
</dbReference>
<dbReference type="InterPro" id="IPR050447">
    <property type="entry name" value="Erg6_SMT_methyltransf"/>
</dbReference>
<dbReference type="InterPro" id="IPR020803">
    <property type="entry name" value="MeTfrase_dom"/>
</dbReference>
<dbReference type="InterPro" id="IPR013216">
    <property type="entry name" value="Methyltransf_11"/>
</dbReference>
<dbReference type="InterPro" id="IPR029063">
    <property type="entry name" value="SAM-dependent_MTases_sf"/>
</dbReference>
<dbReference type="PANTHER" id="PTHR44068:SF11">
    <property type="entry name" value="GERANYL DIPHOSPHATE 2-C-METHYLTRANSFERASE"/>
    <property type="match status" value="1"/>
</dbReference>
<dbReference type="PANTHER" id="PTHR44068">
    <property type="entry name" value="ZGC:194242"/>
    <property type="match status" value="1"/>
</dbReference>
<dbReference type="Pfam" id="PF08241">
    <property type="entry name" value="Methyltransf_11"/>
    <property type="match status" value="1"/>
</dbReference>
<dbReference type="SMART" id="SM00828">
    <property type="entry name" value="PKS_MT"/>
    <property type="match status" value="1"/>
</dbReference>
<dbReference type="SUPFAM" id="SSF53335">
    <property type="entry name" value="S-adenosyl-L-methionine-dependent methyltransferases"/>
    <property type="match status" value="1"/>
</dbReference>
<protein>
    <recommendedName>
        <fullName>Demethylrebeccamycin-D-glucose O-methyltransferase</fullName>
        <ecNumber evidence="2">2.1.1.164</ecNumber>
    </recommendedName>
    <alternativeName>
        <fullName>Rebeccamycin O-methyltransferase</fullName>
    </alternativeName>
    <alternativeName>
        <fullName>Rebeccamycin sugar 4'-O-methyltransferase RebM</fullName>
    </alternativeName>
</protein>